<organism>
    <name type="scientific">Autographa californica nuclear polyhedrosis virus</name>
    <name type="common">AcMNPV</name>
    <dbReference type="NCBI Taxonomy" id="46015"/>
    <lineage>
        <taxon>Viruses</taxon>
        <taxon>Viruses incertae sedis</taxon>
        <taxon>Naldaviricetes</taxon>
        <taxon>Lefavirales</taxon>
        <taxon>Baculoviridae</taxon>
        <taxon>Alphabaculovirus</taxon>
        <taxon>Alphabaculovirus aucalifornicae</taxon>
    </lineage>
</organism>
<reference key="1">
    <citation type="journal article" date="1994" name="Virology">
        <title>The complete DNA sequence of Autographa californica nuclear polyhedrosis virus.</title>
        <authorList>
            <person name="Ayres M.D."/>
            <person name="Howard S.C."/>
            <person name="Kuzio J."/>
            <person name="Lopez-Ferber M."/>
            <person name="Possee R.D."/>
        </authorList>
    </citation>
    <scope>NUCLEOTIDE SEQUENCE [LARGE SCALE GENOMIC DNA]</scope>
    <source>
        <strain>C6</strain>
    </source>
</reference>
<reference key="2">
    <citation type="journal article" date="1990" name="Virology">
        <title>Nucleotide sequence and characterization of the 39K gene region of Autographa californica nuclear polyhedrosis virus.</title>
        <authorList>
            <person name="Guarino L.A."/>
            <person name="Smith M.W."/>
        </authorList>
    </citation>
    <scope>NUCLEOTIDE SEQUENCE [GENOMIC DNA]</scope>
</reference>
<reference key="3">
    <citation type="journal article" date="2016" name="Virol. Sin.">
        <title>The role of viral protein Ac34 in nuclear relocation of subunits of the actin-related protein 2/3 complex.</title>
        <authorList>
            <person name="Mu J."/>
            <person name="Zhang Y."/>
            <person name="Hu Y."/>
            <person name="Hu X."/>
            <person name="Zhou Y."/>
            <person name="Chen X."/>
            <person name="Wang Y."/>
        </authorList>
    </citation>
    <scope>FUNCTION</scope>
    <scope>INTERACTION WITH HOST P40; P34 AND P20</scope>
</reference>
<reference key="4">
    <citation type="journal article" date="2016" name="PLoS Pathog.">
        <title>Autographa californica Multiple Nucleopolyhedrovirus Ac34 Protein Retains Cellular Actin-Related Protein 2/3 Complex in the Nucleus by Subversion of CRM1-Dependent Nuclear Export.</title>
        <authorList>
            <person name="Mu J."/>
            <person name="Zhang Y."/>
            <person name="Hu Y."/>
            <person name="Hu X."/>
            <person name="Zhou Y."/>
            <person name="Zhao H."/>
            <person name="Pei R."/>
            <person name="Wu C."/>
            <person name="Chen J."/>
            <person name="Zhao H."/>
            <person name="Yang K."/>
            <person name="Oers M.M."/>
            <person name="Chen X."/>
            <person name="Wang Y."/>
        </authorList>
    </citation>
    <scope>FUNCTION</scope>
    <scope>SUBCELLULAR LOCATION</scope>
</reference>
<comment type="function">
    <text evidence="1 2">Plays a role in the translocation of the P40 subunit of host Arp2/3 to the nucleus. The robust nuclear accumulation of Arp2/3 induces nuclear actin polymerization to assist in virus replication. Mechanistically, subverts the host CRM1-dependent nuclear export pathway leading to Arp2/3 acumulation in the host nucleus.</text>
</comment>
<comment type="subunit">
    <text evidence="2">Interacts with host proteins P40, P34 ands P20.</text>
</comment>
<comment type="subcellular location">
    <subcellularLocation>
        <location evidence="1">Host nucleus</location>
    </subcellularLocation>
</comment>
<proteinExistence type="evidence at protein level"/>
<evidence type="ECO:0000269" key="1">
    <source>
    </source>
</evidence>
<evidence type="ECO:0000269" key="2">
    <source>
    </source>
</evidence>
<evidence type="ECO:0000305" key="3"/>
<dbReference type="EMBL" id="L22858">
    <property type="protein sequence ID" value="AAA66664.1"/>
    <property type="molecule type" value="Genomic_DNA"/>
</dbReference>
<dbReference type="EMBL" id="M37122">
    <property type="protein sequence ID" value="AAA46686.1"/>
    <property type="molecule type" value="Genomic_DNA"/>
</dbReference>
<dbReference type="PIR" id="B72854">
    <property type="entry name" value="B72854"/>
</dbReference>
<dbReference type="PIR" id="F45355">
    <property type="entry name" value="F45355"/>
</dbReference>
<dbReference type="KEGG" id="vg:1403866"/>
<dbReference type="OrthoDB" id="16007at10239"/>
<dbReference type="Proteomes" id="UP000008292">
    <property type="component" value="Segment"/>
</dbReference>
<dbReference type="GO" id="GO:0042025">
    <property type="term" value="C:host cell nucleus"/>
    <property type="evidence" value="ECO:0007669"/>
    <property type="project" value="UniProtKB-SubCell"/>
</dbReference>
<dbReference type="InterPro" id="IPR009657">
    <property type="entry name" value="Protein_Ac34"/>
</dbReference>
<dbReference type="Pfam" id="PF06851">
    <property type="entry name" value="DUF1247"/>
    <property type="match status" value="1"/>
</dbReference>
<accession>P21287</accession>
<sequence length="215" mass="24885">MTTVAVNAPLPPPLVELCNRRPIPTPRIISLQRQLISTPVVKNYQADVQEAINDFKRLNITPGHLGEVIDTMGQQGKLLPEIIEADDDFKVNQTRNLSCKTVEYLNFLENDKLFRCRLCYTHADWLWCDFHRNHAYRGTRDITCNNYVEHLNSDMGVVMLIEEYFYCLSSCNFKQDAKRALQTLTKFESLSDLMASYNFSTPDLDTNAYELMDFE</sequence>
<organismHost>
    <name type="scientific">Lepidoptera</name>
    <name type="common">butterflies and moths</name>
    <dbReference type="NCBI Taxonomy" id="7088"/>
</organismHost>
<feature type="chain" id="PRO_0000132973" description="Protein Ac34">
    <location>
        <begin position="1"/>
        <end position="215"/>
    </location>
</feature>
<feature type="sequence conflict" description="In Ref. 2; AAA46686." evidence="3" ref="2">
    <original>ND</original>
    <variation>DA</variation>
    <location>
        <begin position="53"/>
        <end position="54"/>
    </location>
</feature>
<protein>
    <recommendedName>
        <fullName>Protein Ac34</fullName>
    </recommendedName>
</protein>
<keyword id="KW-1048">Host nucleus</keyword>
<keyword id="KW-1185">Reference proteome</keyword>
<gene>
    <name type="primary">Ac34</name>
    <name type="ORF">ORF2</name>
</gene>
<name>AC34_NPVAC</name>